<evidence type="ECO:0000255" key="1">
    <source>
        <dbReference type="HAMAP-Rule" id="MF_00073"/>
    </source>
</evidence>
<protein>
    <recommendedName>
        <fullName evidence="1">Transcription antitermination protein NusB</fullName>
    </recommendedName>
    <alternativeName>
        <fullName evidence="1">Antitermination factor NusB</fullName>
    </alternativeName>
</protein>
<name>NUSB_STACT</name>
<sequence>MSRKESRSQAFQALFQLEMENTDLSIDEAINFIKDDYPDLEFDFIYWLVSGVKDHEPVLDEKIQNNLKDWKISRLLKTDRIILRMAAFELANSDTPPKVIINEAVELAKQYSDDDHYRFINGVLSNLN</sequence>
<keyword id="KW-1185">Reference proteome</keyword>
<keyword id="KW-0694">RNA-binding</keyword>
<keyword id="KW-0804">Transcription</keyword>
<keyword id="KW-0889">Transcription antitermination</keyword>
<keyword id="KW-0805">Transcription regulation</keyword>
<accession>B9DNQ0</accession>
<comment type="function">
    <text evidence="1">Involved in transcription antitermination. Required for transcription of ribosomal RNA (rRNA) genes. Binds specifically to the boxA antiterminator sequence of the ribosomal RNA (rrn) operons.</text>
</comment>
<comment type="similarity">
    <text evidence="1">Belongs to the NusB family.</text>
</comment>
<organism>
    <name type="scientific">Staphylococcus carnosus (strain TM300)</name>
    <dbReference type="NCBI Taxonomy" id="396513"/>
    <lineage>
        <taxon>Bacteria</taxon>
        <taxon>Bacillati</taxon>
        <taxon>Bacillota</taxon>
        <taxon>Bacilli</taxon>
        <taxon>Bacillales</taxon>
        <taxon>Staphylococcaceae</taxon>
        <taxon>Staphylococcus</taxon>
    </lineage>
</organism>
<feature type="chain" id="PRO_1000192457" description="Transcription antitermination protein NusB">
    <location>
        <begin position="1"/>
        <end position="128"/>
    </location>
</feature>
<dbReference type="EMBL" id="AM295250">
    <property type="protein sequence ID" value="CAL28056.1"/>
    <property type="molecule type" value="Genomic_DNA"/>
</dbReference>
<dbReference type="RefSeq" id="WP_015900397.1">
    <property type="nucleotide sequence ID" value="NC_012121.1"/>
</dbReference>
<dbReference type="SMR" id="B9DNQ0"/>
<dbReference type="GeneID" id="93793573"/>
<dbReference type="KEGG" id="sca:SCA_1148"/>
<dbReference type="eggNOG" id="COG0781">
    <property type="taxonomic scope" value="Bacteria"/>
</dbReference>
<dbReference type="HOGENOM" id="CLU_087843_3_1_9"/>
<dbReference type="OrthoDB" id="9811381at2"/>
<dbReference type="BioCyc" id="SCAR396513:SCA_RS05750-MONOMER"/>
<dbReference type="Proteomes" id="UP000000444">
    <property type="component" value="Chromosome"/>
</dbReference>
<dbReference type="GO" id="GO:0005829">
    <property type="term" value="C:cytosol"/>
    <property type="evidence" value="ECO:0007669"/>
    <property type="project" value="TreeGrafter"/>
</dbReference>
<dbReference type="GO" id="GO:0003723">
    <property type="term" value="F:RNA binding"/>
    <property type="evidence" value="ECO:0007669"/>
    <property type="project" value="UniProtKB-UniRule"/>
</dbReference>
<dbReference type="GO" id="GO:0006353">
    <property type="term" value="P:DNA-templated transcription termination"/>
    <property type="evidence" value="ECO:0007669"/>
    <property type="project" value="UniProtKB-UniRule"/>
</dbReference>
<dbReference type="GO" id="GO:0031564">
    <property type="term" value="P:transcription antitermination"/>
    <property type="evidence" value="ECO:0007669"/>
    <property type="project" value="UniProtKB-KW"/>
</dbReference>
<dbReference type="Gene3D" id="1.10.940.10">
    <property type="entry name" value="NusB-like"/>
    <property type="match status" value="1"/>
</dbReference>
<dbReference type="HAMAP" id="MF_00073">
    <property type="entry name" value="NusB"/>
    <property type="match status" value="1"/>
</dbReference>
<dbReference type="InterPro" id="IPR035926">
    <property type="entry name" value="NusB-like_sf"/>
</dbReference>
<dbReference type="InterPro" id="IPR011605">
    <property type="entry name" value="NusB_fam"/>
</dbReference>
<dbReference type="InterPro" id="IPR006027">
    <property type="entry name" value="NusB_RsmB_TIM44"/>
</dbReference>
<dbReference type="NCBIfam" id="TIGR01951">
    <property type="entry name" value="nusB"/>
    <property type="match status" value="1"/>
</dbReference>
<dbReference type="PANTHER" id="PTHR11078:SF3">
    <property type="entry name" value="ANTITERMINATION NUSB DOMAIN-CONTAINING PROTEIN"/>
    <property type="match status" value="1"/>
</dbReference>
<dbReference type="PANTHER" id="PTHR11078">
    <property type="entry name" value="N UTILIZATION SUBSTANCE PROTEIN B-RELATED"/>
    <property type="match status" value="1"/>
</dbReference>
<dbReference type="Pfam" id="PF01029">
    <property type="entry name" value="NusB"/>
    <property type="match status" value="1"/>
</dbReference>
<dbReference type="SUPFAM" id="SSF48013">
    <property type="entry name" value="NusB-like"/>
    <property type="match status" value="1"/>
</dbReference>
<proteinExistence type="inferred from homology"/>
<reference key="1">
    <citation type="journal article" date="2009" name="Appl. Environ. Microbiol.">
        <title>Genome analysis of the meat starter culture bacterium Staphylococcus carnosus TM300.</title>
        <authorList>
            <person name="Rosenstein R."/>
            <person name="Nerz C."/>
            <person name="Biswas L."/>
            <person name="Resch A."/>
            <person name="Raddatz G."/>
            <person name="Schuster S.C."/>
            <person name="Goetz F."/>
        </authorList>
    </citation>
    <scope>NUCLEOTIDE SEQUENCE [LARGE SCALE GENOMIC DNA]</scope>
    <source>
        <strain>TM300</strain>
    </source>
</reference>
<gene>
    <name evidence="1" type="primary">nusB</name>
    <name type="ordered locus">Sca_1148</name>
</gene>